<sequence length="1343" mass="149782">MGYSYSEKKRIRKDFGKRPQVLNVPYLLTIQLDSFDKFIQKDPEGQQGLEAAFRSVFPIVSNNGYTELQYVDYRLEEPEFDVRECQIRGSTYAAGLRVKLRLVSYDKESSSRAVKDIKENEVYMGEIPLMTDNGTFVINGTERVIVSQLHRSPGVFFDSDKGKTHSSGKVLYNARIIPYRGSWLDFEFDPKDNLFARIDRRRKLPATIILRALGYTTEEILNLFFDKITFEIAGDKLLMTLVPERLRGETASFDIEANGKVYVERGRRITARHIKALEKDNISQVVVPSEYILGKVASKDYVDLESGEIICPANGEISLETLAKLAQAGYTTIETLFTNDLDYGPYISETLRVDPTYDKISALYEIYRMMRPGEPPTPESSEALFNNLFFSAERYDLSTVGRMKFNRSLAFPEGEGAGILSNEDIIAVMRKLIDIRNGRGEVDDIDHLGNRRIRSVGEMAENQFRIGLVRVERAVKERLSLGDLDAITPQDLINPKPISAAVKEFFGSSQLSQFMDQNNPLSEVTHKRRISALGPGGLTRERAGFEVRDVHNTHYGRLCPIETPEGPNIGLINSLSAFARTNDYGFLETPYRKVVDGQVTEEIEYLSVIDEANYIIAQANSNLDENNRFTDAFVTARGERGESGLYKPEDIHYMDVSTQQVVSVAAALIPFLEHDDANRALMGANMQRQAVPTLRADKPLVGTGMEKPIALDSGVAVVAKRGGTVQYVDASRIVIKVNEDETIAGEAGIDIYNLIKYTRSNQNTCINQIPCVNLGDPINRGEVLADGPSTDLGELALGQNIRVAFMPWNGYNFEDSMLVSERVVQQDRFTTIHIQELSCVARDTKLGAEEITADIPNVGESALSKLDESGIVYVGAEVKGGDILVGKVTPKGETQLTPEEKLLRAIFGEKASDVKDSSLRVPNGTSGTVIDVQVFTRDGVEKDKRALEIEEMQLREAKKDLTEELEILEAGLFARVRNLLISSGADAAQLDKVDRTKWLEQTIADEEKQNQLEQLAEQYEELRKEFEHKLEVKRKKIIKGDDLAPGVLKVVKVYLAVKRQIQPGDKMAGRHGNKGVISKINPVEDMPYDENGQPVEIVLNPLGVPSRMNIGQILETHLGLAAKGIGDQINAMLKQKQEVEKLRSYIQKAYDLLGNGSQKVDLSTFTDEEVLRLAGNLRKGLPVATPVFDGADEAEIKELLKLGGLPTSGQITLYDGRTGEKFERPVTVGYMYMLKLNHLVDDKMHARSTGSYSLVTQQPLGGKAQFGGQRFGEMEVWALEAYGAAYTLQEMLTVKSDDVNGRTKMYKNIVSGNQHMEPGTPESFNVIMKEIRSLGLNIELDEE</sequence>
<evidence type="ECO:0000255" key="1">
    <source>
        <dbReference type="HAMAP-Rule" id="MF_01321"/>
    </source>
</evidence>
<evidence type="ECO:0000305" key="2"/>
<protein>
    <recommendedName>
        <fullName evidence="1">DNA-directed RNA polymerase subunit beta</fullName>
        <shortName evidence="1">RNAP subunit beta</shortName>
        <ecNumber evidence="1">2.7.7.6</ecNumber>
    </recommendedName>
    <alternativeName>
        <fullName evidence="1">RNA polymerase subunit beta</fullName>
    </alternativeName>
    <alternativeName>
        <fullName evidence="1">Transcriptase subunit beta</fullName>
    </alternativeName>
</protein>
<gene>
    <name evidence="1" type="primary">rpoB</name>
    <name type="ordered locus">CGSHiGG_05825</name>
</gene>
<comment type="function">
    <text evidence="1">DNA-dependent RNA polymerase catalyzes the transcription of DNA into RNA using the four ribonucleoside triphosphates as substrates.</text>
</comment>
<comment type="catalytic activity">
    <reaction evidence="1">
        <text>RNA(n) + a ribonucleoside 5'-triphosphate = RNA(n+1) + diphosphate</text>
        <dbReference type="Rhea" id="RHEA:21248"/>
        <dbReference type="Rhea" id="RHEA-COMP:14527"/>
        <dbReference type="Rhea" id="RHEA-COMP:17342"/>
        <dbReference type="ChEBI" id="CHEBI:33019"/>
        <dbReference type="ChEBI" id="CHEBI:61557"/>
        <dbReference type="ChEBI" id="CHEBI:140395"/>
        <dbReference type="EC" id="2.7.7.6"/>
    </reaction>
</comment>
<comment type="subunit">
    <text evidence="1">The RNAP catalytic core consists of 2 alpha, 1 beta, 1 beta' and 1 omega subunit. When a sigma factor is associated with the core the holoenzyme is formed, which can initiate transcription.</text>
</comment>
<comment type="similarity">
    <text evidence="1">Belongs to the RNA polymerase beta chain family.</text>
</comment>
<comment type="sequence caution" evidence="2">
    <conflict type="frameshift">
        <sequence resource="EMBL-CDS" id="ABR00076"/>
    </conflict>
</comment>
<name>RPOB_HAEIG</name>
<dbReference type="EC" id="2.7.7.6" evidence="1"/>
<dbReference type="EMBL" id="CP000672">
    <property type="protein sequence ID" value="ABR00076.1"/>
    <property type="status" value="ALT_FRAME"/>
    <property type="molecule type" value="Genomic_DNA"/>
</dbReference>
<dbReference type="SMR" id="A5UH20"/>
<dbReference type="KEGG" id="hiq:CGSHiGG_05825"/>
<dbReference type="HOGENOM" id="CLU_000524_4_0_6"/>
<dbReference type="Proteomes" id="UP000001990">
    <property type="component" value="Chromosome"/>
</dbReference>
<dbReference type="GO" id="GO:0000428">
    <property type="term" value="C:DNA-directed RNA polymerase complex"/>
    <property type="evidence" value="ECO:0007669"/>
    <property type="project" value="UniProtKB-KW"/>
</dbReference>
<dbReference type="GO" id="GO:0003677">
    <property type="term" value="F:DNA binding"/>
    <property type="evidence" value="ECO:0007669"/>
    <property type="project" value="UniProtKB-UniRule"/>
</dbReference>
<dbReference type="GO" id="GO:0003899">
    <property type="term" value="F:DNA-directed RNA polymerase activity"/>
    <property type="evidence" value="ECO:0007669"/>
    <property type="project" value="UniProtKB-UniRule"/>
</dbReference>
<dbReference type="GO" id="GO:0032549">
    <property type="term" value="F:ribonucleoside binding"/>
    <property type="evidence" value="ECO:0007669"/>
    <property type="project" value="InterPro"/>
</dbReference>
<dbReference type="GO" id="GO:0006351">
    <property type="term" value="P:DNA-templated transcription"/>
    <property type="evidence" value="ECO:0007669"/>
    <property type="project" value="UniProtKB-UniRule"/>
</dbReference>
<dbReference type="CDD" id="cd00653">
    <property type="entry name" value="RNA_pol_B_RPB2"/>
    <property type="match status" value="1"/>
</dbReference>
<dbReference type="FunFam" id="2.40.270.10:FF:000004">
    <property type="entry name" value="DNA-directed RNA polymerase subunit beta"/>
    <property type="match status" value="1"/>
</dbReference>
<dbReference type="FunFam" id="2.40.50.100:FF:000006">
    <property type="entry name" value="DNA-directed RNA polymerase subunit beta"/>
    <property type="match status" value="1"/>
</dbReference>
<dbReference type="FunFam" id="2.40.50.150:FF:000001">
    <property type="entry name" value="DNA-directed RNA polymerase subunit beta"/>
    <property type="match status" value="1"/>
</dbReference>
<dbReference type="FunFam" id="3.90.1100.10:FF:000002">
    <property type="entry name" value="DNA-directed RNA polymerase subunit beta"/>
    <property type="match status" value="1"/>
</dbReference>
<dbReference type="FunFam" id="3.90.1110.10:FF:000001">
    <property type="entry name" value="DNA-directed RNA polymerase subunit beta"/>
    <property type="match status" value="1"/>
</dbReference>
<dbReference type="FunFam" id="3.90.1110.10:FF:000004">
    <property type="entry name" value="DNA-directed RNA polymerase subunit beta"/>
    <property type="match status" value="1"/>
</dbReference>
<dbReference type="FunFam" id="3.90.1800.10:FF:000001">
    <property type="entry name" value="DNA-directed RNA polymerase subunit beta"/>
    <property type="match status" value="1"/>
</dbReference>
<dbReference type="Gene3D" id="2.40.50.100">
    <property type="match status" value="1"/>
</dbReference>
<dbReference type="Gene3D" id="2.40.50.150">
    <property type="match status" value="1"/>
</dbReference>
<dbReference type="Gene3D" id="3.90.1100.10">
    <property type="match status" value="2"/>
</dbReference>
<dbReference type="Gene3D" id="2.30.150.10">
    <property type="entry name" value="DNA-directed RNA polymerase, beta subunit, external 1 domain"/>
    <property type="match status" value="1"/>
</dbReference>
<dbReference type="Gene3D" id="2.40.270.10">
    <property type="entry name" value="DNA-directed RNA polymerase, subunit 2, domain 6"/>
    <property type="match status" value="2"/>
</dbReference>
<dbReference type="Gene3D" id="3.90.1800.10">
    <property type="entry name" value="RNA polymerase alpha subunit dimerisation domain"/>
    <property type="match status" value="1"/>
</dbReference>
<dbReference type="Gene3D" id="3.90.1110.10">
    <property type="entry name" value="RNA polymerase Rpb2, domain 2"/>
    <property type="match status" value="2"/>
</dbReference>
<dbReference type="HAMAP" id="MF_01321">
    <property type="entry name" value="RNApol_bact_RpoB"/>
    <property type="match status" value="1"/>
</dbReference>
<dbReference type="InterPro" id="IPR042107">
    <property type="entry name" value="DNA-dir_RNA_pol_bsu_ext_1_sf"/>
</dbReference>
<dbReference type="InterPro" id="IPR019462">
    <property type="entry name" value="DNA-dir_RNA_pol_bsu_external_1"/>
</dbReference>
<dbReference type="InterPro" id="IPR015712">
    <property type="entry name" value="DNA-dir_RNA_pol_su2"/>
</dbReference>
<dbReference type="InterPro" id="IPR007120">
    <property type="entry name" value="DNA-dir_RNAP_su2_dom"/>
</dbReference>
<dbReference type="InterPro" id="IPR037033">
    <property type="entry name" value="DNA-dir_RNAP_su2_hyb_sf"/>
</dbReference>
<dbReference type="InterPro" id="IPR010243">
    <property type="entry name" value="RNA_pol_bsu_bac"/>
</dbReference>
<dbReference type="InterPro" id="IPR007121">
    <property type="entry name" value="RNA_pol_bsu_CS"/>
</dbReference>
<dbReference type="InterPro" id="IPR007644">
    <property type="entry name" value="RNA_pol_bsu_protrusion"/>
</dbReference>
<dbReference type="InterPro" id="IPR007642">
    <property type="entry name" value="RNA_pol_Rpb2_2"/>
</dbReference>
<dbReference type="InterPro" id="IPR037034">
    <property type="entry name" value="RNA_pol_Rpb2_2_sf"/>
</dbReference>
<dbReference type="InterPro" id="IPR007645">
    <property type="entry name" value="RNA_pol_Rpb2_3"/>
</dbReference>
<dbReference type="InterPro" id="IPR007641">
    <property type="entry name" value="RNA_pol_Rpb2_7"/>
</dbReference>
<dbReference type="InterPro" id="IPR014724">
    <property type="entry name" value="RNA_pol_RPB2_OB-fold"/>
</dbReference>
<dbReference type="NCBIfam" id="NF001616">
    <property type="entry name" value="PRK00405.1"/>
    <property type="match status" value="1"/>
</dbReference>
<dbReference type="NCBIfam" id="TIGR02013">
    <property type="entry name" value="rpoB"/>
    <property type="match status" value="1"/>
</dbReference>
<dbReference type="PANTHER" id="PTHR20856">
    <property type="entry name" value="DNA-DIRECTED RNA POLYMERASE I SUBUNIT 2"/>
    <property type="match status" value="1"/>
</dbReference>
<dbReference type="Pfam" id="PF04563">
    <property type="entry name" value="RNA_pol_Rpb2_1"/>
    <property type="match status" value="1"/>
</dbReference>
<dbReference type="Pfam" id="PF04561">
    <property type="entry name" value="RNA_pol_Rpb2_2"/>
    <property type="match status" value="2"/>
</dbReference>
<dbReference type="Pfam" id="PF04565">
    <property type="entry name" value="RNA_pol_Rpb2_3"/>
    <property type="match status" value="1"/>
</dbReference>
<dbReference type="Pfam" id="PF10385">
    <property type="entry name" value="RNA_pol_Rpb2_45"/>
    <property type="match status" value="1"/>
</dbReference>
<dbReference type="Pfam" id="PF00562">
    <property type="entry name" value="RNA_pol_Rpb2_6"/>
    <property type="match status" value="1"/>
</dbReference>
<dbReference type="Pfam" id="PF04560">
    <property type="entry name" value="RNA_pol_Rpb2_7"/>
    <property type="match status" value="1"/>
</dbReference>
<dbReference type="SUPFAM" id="SSF64484">
    <property type="entry name" value="beta and beta-prime subunits of DNA dependent RNA-polymerase"/>
    <property type="match status" value="1"/>
</dbReference>
<dbReference type="PROSITE" id="PS01166">
    <property type="entry name" value="RNA_POL_BETA"/>
    <property type="match status" value="1"/>
</dbReference>
<keyword id="KW-0240">DNA-directed RNA polymerase</keyword>
<keyword id="KW-0548">Nucleotidyltransferase</keyword>
<keyword id="KW-0804">Transcription</keyword>
<keyword id="KW-0808">Transferase</keyword>
<proteinExistence type="inferred from homology"/>
<feature type="chain" id="PRO_0000329179" description="DNA-directed RNA polymerase subunit beta">
    <location>
        <begin position="1"/>
        <end position="1343"/>
    </location>
</feature>
<organism>
    <name type="scientific">Haemophilus influenzae (strain PittGG)</name>
    <dbReference type="NCBI Taxonomy" id="374931"/>
    <lineage>
        <taxon>Bacteria</taxon>
        <taxon>Pseudomonadati</taxon>
        <taxon>Pseudomonadota</taxon>
        <taxon>Gammaproteobacteria</taxon>
        <taxon>Pasteurellales</taxon>
        <taxon>Pasteurellaceae</taxon>
        <taxon>Haemophilus</taxon>
    </lineage>
</organism>
<accession>A5UH20</accession>
<reference key="1">
    <citation type="journal article" date="2007" name="Genome Biol.">
        <title>Characterization and modeling of the Haemophilus influenzae core and supragenomes based on the complete genomic sequences of Rd and 12 clinical nontypeable strains.</title>
        <authorList>
            <person name="Hogg J.S."/>
            <person name="Hu F.Z."/>
            <person name="Janto B."/>
            <person name="Boissy R."/>
            <person name="Hayes J."/>
            <person name="Keefe R."/>
            <person name="Post J.C."/>
            <person name="Ehrlich G.D."/>
        </authorList>
    </citation>
    <scope>NUCLEOTIDE SEQUENCE [LARGE SCALE GENOMIC DNA]</scope>
    <source>
        <strain>PittGG</strain>
    </source>
</reference>